<dbReference type="EC" id="3.6.4.13"/>
<dbReference type="EMBL" id="CP009814">
    <property type="protein sequence ID" value="ATZ54399.1"/>
    <property type="molecule type" value="Genomic_DNA"/>
</dbReference>
<dbReference type="SMR" id="A6RUH2"/>
<dbReference type="EnsemblFungi" id="Bcin10g04050.1">
    <property type="protein sequence ID" value="Bcin10p04050.1"/>
    <property type="gene ID" value="Bcin10g04050"/>
</dbReference>
<dbReference type="GeneID" id="5438076"/>
<dbReference type="KEGG" id="bfu:BCIN_10g04050"/>
<dbReference type="VEuPathDB" id="FungiDB:Bcin10g04050"/>
<dbReference type="OMA" id="MIDPPKQ"/>
<dbReference type="OrthoDB" id="10259843at2759"/>
<dbReference type="Proteomes" id="UP000001798">
    <property type="component" value="Chromosome bcin10"/>
</dbReference>
<dbReference type="GO" id="GO:0005829">
    <property type="term" value="C:cytosol"/>
    <property type="evidence" value="ECO:0007669"/>
    <property type="project" value="TreeGrafter"/>
</dbReference>
<dbReference type="GO" id="GO:0005730">
    <property type="term" value="C:nucleolus"/>
    <property type="evidence" value="ECO:0007669"/>
    <property type="project" value="UniProtKB-SubCell"/>
</dbReference>
<dbReference type="GO" id="GO:0030687">
    <property type="term" value="C:preribosome, large subunit precursor"/>
    <property type="evidence" value="ECO:0007669"/>
    <property type="project" value="EnsemblFungi"/>
</dbReference>
<dbReference type="GO" id="GO:0005524">
    <property type="term" value="F:ATP binding"/>
    <property type="evidence" value="ECO:0007669"/>
    <property type="project" value="UniProtKB-KW"/>
</dbReference>
<dbReference type="GO" id="GO:0016887">
    <property type="term" value="F:ATP hydrolysis activity"/>
    <property type="evidence" value="ECO:0007669"/>
    <property type="project" value="RHEA"/>
</dbReference>
<dbReference type="GO" id="GO:0003723">
    <property type="term" value="F:RNA binding"/>
    <property type="evidence" value="ECO:0007669"/>
    <property type="project" value="UniProtKB-KW"/>
</dbReference>
<dbReference type="GO" id="GO:0003724">
    <property type="term" value="F:RNA helicase activity"/>
    <property type="evidence" value="ECO:0007669"/>
    <property type="project" value="UniProtKB-EC"/>
</dbReference>
<dbReference type="GO" id="GO:0000027">
    <property type="term" value="P:ribosomal large subunit assembly"/>
    <property type="evidence" value="ECO:0007669"/>
    <property type="project" value="EnsemblFungi"/>
</dbReference>
<dbReference type="GO" id="GO:0006364">
    <property type="term" value="P:rRNA processing"/>
    <property type="evidence" value="ECO:0007669"/>
    <property type="project" value="EnsemblFungi"/>
</dbReference>
<dbReference type="CDD" id="cd17947">
    <property type="entry name" value="DEADc_DDX27"/>
    <property type="match status" value="1"/>
</dbReference>
<dbReference type="CDD" id="cd18787">
    <property type="entry name" value="SF2_C_DEAD"/>
    <property type="match status" value="1"/>
</dbReference>
<dbReference type="Gene3D" id="3.40.50.300">
    <property type="entry name" value="P-loop containing nucleotide triphosphate hydrolases"/>
    <property type="match status" value="2"/>
</dbReference>
<dbReference type="InterPro" id="IPR011545">
    <property type="entry name" value="DEAD/DEAH_box_helicase_dom"/>
</dbReference>
<dbReference type="InterPro" id="IPR050079">
    <property type="entry name" value="DEAD_box_RNA_helicase"/>
</dbReference>
<dbReference type="InterPro" id="IPR014001">
    <property type="entry name" value="Helicase_ATP-bd"/>
</dbReference>
<dbReference type="InterPro" id="IPR001650">
    <property type="entry name" value="Helicase_C-like"/>
</dbReference>
<dbReference type="InterPro" id="IPR027417">
    <property type="entry name" value="P-loop_NTPase"/>
</dbReference>
<dbReference type="InterPro" id="IPR000629">
    <property type="entry name" value="RNA-helicase_DEAD-box_CS"/>
</dbReference>
<dbReference type="InterPro" id="IPR014014">
    <property type="entry name" value="RNA_helicase_DEAD_Q_motif"/>
</dbReference>
<dbReference type="PANTHER" id="PTHR47959:SF1">
    <property type="entry name" value="ATP-DEPENDENT RNA HELICASE DBPA"/>
    <property type="match status" value="1"/>
</dbReference>
<dbReference type="PANTHER" id="PTHR47959">
    <property type="entry name" value="ATP-DEPENDENT RNA HELICASE RHLE-RELATED"/>
    <property type="match status" value="1"/>
</dbReference>
<dbReference type="Pfam" id="PF00270">
    <property type="entry name" value="DEAD"/>
    <property type="match status" value="1"/>
</dbReference>
<dbReference type="Pfam" id="PF00271">
    <property type="entry name" value="Helicase_C"/>
    <property type="match status" value="1"/>
</dbReference>
<dbReference type="SMART" id="SM00487">
    <property type="entry name" value="DEXDc"/>
    <property type="match status" value="1"/>
</dbReference>
<dbReference type="SMART" id="SM00490">
    <property type="entry name" value="HELICc"/>
    <property type="match status" value="1"/>
</dbReference>
<dbReference type="SUPFAM" id="SSF52540">
    <property type="entry name" value="P-loop containing nucleoside triphosphate hydrolases"/>
    <property type="match status" value="2"/>
</dbReference>
<dbReference type="PROSITE" id="PS00039">
    <property type="entry name" value="DEAD_ATP_HELICASE"/>
    <property type="match status" value="1"/>
</dbReference>
<dbReference type="PROSITE" id="PS51192">
    <property type="entry name" value="HELICASE_ATP_BIND_1"/>
    <property type="match status" value="1"/>
</dbReference>
<dbReference type="PROSITE" id="PS51194">
    <property type="entry name" value="HELICASE_CTER"/>
    <property type="match status" value="1"/>
</dbReference>
<dbReference type="PROSITE" id="PS51195">
    <property type="entry name" value="Q_MOTIF"/>
    <property type="match status" value="1"/>
</dbReference>
<evidence type="ECO:0000250" key="1"/>
<evidence type="ECO:0000255" key="2">
    <source>
        <dbReference type="PROSITE-ProRule" id="PRU00541"/>
    </source>
</evidence>
<evidence type="ECO:0000255" key="3">
    <source>
        <dbReference type="PROSITE-ProRule" id="PRU00542"/>
    </source>
</evidence>
<evidence type="ECO:0000256" key="4">
    <source>
        <dbReference type="SAM" id="MobiDB-lite"/>
    </source>
</evidence>
<evidence type="ECO:0000305" key="5"/>
<comment type="function">
    <text evidence="1">ATP-binding RNA helicase involved in ribosome assembly.</text>
</comment>
<comment type="catalytic activity">
    <reaction>
        <text>ATP + H2O = ADP + phosphate + H(+)</text>
        <dbReference type="Rhea" id="RHEA:13065"/>
        <dbReference type="ChEBI" id="CHEBI:15377"/>
        <dbReference type="ChEBI" id="CHEBI:15378"/>
        <dbReference type="ChEBI" id="CHEBI:30616"/>
        <dbReference type="ChEBI" id="CHEBI:43474"/>
        <dbReference type="ChEBI" id="CHEBI:456216"/>
        <dbReference type="EC" id="3.6.4.13"/>
    </reaction>
</comment>
<comment type="subunit">
    <text evidence="1">Associates with pre-ribosomal particles.</text>
</comment>
<comment type="subcellular location">
    <subcellularLocation>
        <location evidence="1">Nucleus</location>
        <location evidence="1">Nucleolus</location>
    </subcellularLocation>
</comment>
<comment type="domain">
    <text>The Q motif is unique to and characteristic of the DEAD box family of RNA helicases and controls ATP binding and hydrolysis.</text>
</comment>
<comment type="similarity">
    <text evidence="5">Belongs to the DEAD box helicase family. DDX27/DRS1 subfamily.</text>
</comment>
<accession>A6RUH2</accession>
<accession>A0A384JUX6</accession>
<feature type="chain" id="PRO_0000310213" description="ATP-dependent RNA helicase drs1">
    <location>
        <begin position="1"/>
        <end position="801"/>
    </location>
</feature>
<feature type="domain" description="Helicase ATP-binding" evidence="2">
    <location>
        <begin position="299"/>
        <end position="473"/>
    </location>
</feature>
<feature type="domain" description="Helicase C-terminal" evidence="3">
    <location>
        <begin position="503"/>
        <end position="682"/>
    </location>
</feature>
<feature type="region of interest" description="Disordered" evidence="4">
    <location>
        <begin position="1"/>
        <end position="79"/>
    </location>
</feature>
<feature type="region of interest" description="Disordered" evidence="4">
    <location>
        <begin position="131"/>
        <end position="244"/>
    </location>
</feature>
<feature type="region of interest" description="Disordered" evidence="4">
    <location>
        <begin position="727"/>
        <end position="801"/>
    </location>
</feature>
<feature type="short sequence motif" description="Q motif">
    <location>
        <begin position="268"/>
        <end position="296"/>
    </location>
</feature>
<feature type="short sequence motif" description="DEAD box">
    <location>
        <begin position="421"/>
        <end position="424"/>
    </location>
</feature>
<feature type="compositionally biased region" description="Basic and acidic residues" evidence="4">
    <location>
        <begin position="1"/>
        <end position="10"/>
    </location>
</feature>
<feature type="compositionally biased region" description="Acidic residues" evidence="4">
    <location>
        <begin position="18"/>
        <end position="32"/>
    </location>
</feature>
<feature type="compositionally biased region" description="Acidic residues" evidence="4">
    <location>
        <begin position="144"/>
        <end position="179"/>
    </location>
</feature>
<feature type="compositionally biased region" description="Acidic residues" evidence="4">
    <location>
        <begin position="193"/>
        <end position="214"/>
    </location>
</feature>
<feature type="compositionally biased region" description="Acidic residues" evidence="4">
    <location>
        <begin position="227"/>
        <end position="243"/>
    </location>
</feature>
<feature type="compositionally biased region" description="Basic and acidic residues" evidence="4">
    <location>
        <begin position="735"/>
        <end position="770"/>
    </location>
</feature>
<feature type="binding site" evidence="2">
    <location>
        <begin position="312"/>
        <end position="319"/>
    </location>
    <ligand>
        <name>ATP</name>
        <dbReference type="ChEBI" id="CHEBI:30616"/>
    </ligand>
</feature>
<name>DRS1_BOTFB</name>
<keyword id="KW-0067">ATP-binding</keyword>
<keyword id="KW-0347">Helicase</keyword>
<keyword id="KW-0378">Hydrolase</keyword>
<keyword id="KW-0547">Nucleotide-binding</keyword>
<keyword id="KW-0539">Nucleus</keyword>
<keyword id="KW-1185">Reference proteome</keyword>
<keyword id="KW-0690">Ribosome biogenesis</keyword>
<keyword id="KW-0694">RNA-binding</keyword>
<reference key="1">
    <citation type="journal article" date="2011" name="PLoS Genet.">
        <title>Genomic analysis of the necrotrophic fungal pathogens Sclerotinia sclerotiorum and Botrytis cinerea.</title>
        <authorList>
            <person name="Amselem J."/>
            <person name="Cuomo C.A."/>
            <person name="van Kan J.A.L."/>
            <person name="Viaud M."/>
            <person name="Benito E.P."/>
            <person name="Couloux A."/>
            <person name="Coutinho P.M."/>
            <person name="de Vries R.P."/>
            <person name="Dyer P.S."/>
            <person name="Fillinger S."/>
            <person name="Fournier E."/>
            <person name="Gout L."/>
            <person name="Hahn M."/>
            <person name="Kohn L."/>
            <person name="Lapalu N."/>
            <person name="Plummer K.M."/>
            <person name="Pradier J.-M."/>
            <person name="Quevillon E."/>
            <person name="Sharon A."/>
            <person name="Simon A."/>
            <person name="ten Have A."/>
            <person name="Tudzynski B."/>
            <person name="Tudzynski P."/>
            <person name="Wincker P."/>
            <person name="Andrew M."/>
            <person name="Anthouard V."/>
            <person name="Beever R.E."/>
            <person name="Beffa R."/>
            <person name="Benoit I."/>
            <person name="Bouzid O."/>
            <person name="Brault B."/>
            <person name="Chen Z."/>
            <person name="Choquer M."/>
            <person name="Collemare J."/>
            <person name="Cotton P."/>
            <person name="Danchin E.G."/>
            <person name="Da Silva C."/>
            <person name="Gautier A."/>
            <person name="Giraud C."/>
            <person name="Giraud T."/>
            <person name="Gonzalez C."/>
            <person name="Grossetete S."/>
            <person name="Gueldener U."/>
            <person name="Henrissat B."/>
            <person name="Howlett B.J."/>
            <person name="Kodira C."/>
            <person name="Kretschmer M."/>
            <person name="Lappartient A."/>
            <person name="Leroch M."/>
            <person name="Levis C."/>
            <person name="Mauceli E."/>
            <person name="Neuveglise C."/>
            <person name="Oeser B."/>
            <person name="Pearson M."/>
            <person name="Poulain J."/>
            <person name="Poussereau N."/>
            <person name="Quesneville H."/>
            <person name="Rascle C."/>
            <person name="Schumacher J."/>
            <person name="Segurens B."/>
            <person name="Sexton A."/>
            <person name="Silva E."/>
            <person name="Sirven C."/>
            <person name="Soanes D.M."/>
            <person name="Talbot N.J."/>
            <person name="Templeton M."/>
            <person name="Yandava C."/>
            <person name="Yarden O."/>
            <person name="Zeng Q."/>
            <person name="Rollins J.A."/>
            <person name="Lebrun M.-H."/>
            <person name="Dickman M."/>
        </authorList>
    </citation>
    <scope>NUCLEOTIDE SEQUENCE [LARGE SCALE GENOMIC DNA]</scope>
    <source>
        <strain>B05.10</strain>
    </source>
</reference>
<reference key="2">
    <citation type="journal article" date="2012" name="Eukaryot. Cell">
        <title>Genome update of Botrytis cinerea strains B05.10 and T4.</title>
        <authorList>
            <person name="Staats M."/>
            <person name="van Kan J.A.L."/>
        </authorList>
    </citation>
    <scope>NUCLEOTIDE SEQUENCE [LARGE SCALE GENOMIC DNA]</scope>
    <scope>GENOME REANNOTATION</scope>
    <source>
        <strain>B05.10</strain>
    </source>
</reference>
<reference key="3">
    <citation type="journal article" date="2017" name="Mol. Plant Pathol.">
        <title>A gapless genome sequence of the fungus Botrytis cinerea.</title>
        <authorList>
            <person name="van Kan J.A.L."/>
            <person name="Stassen J.H.M."/>
            <person name="Mosbach A."/>
            <person name="van der Lee T.A.J."/>
            <person name="Faino L."/>
            <person name="Farmer A.D."/>
            <person name="Papasotiriou D.G."/>
            <person name="Zhou S."/>
            <person name="Seidl M.F."/>
            <person name="Cottam E."/>
            <person name="Edel D."/>
            <person name="Hahn M."/>
            <person name="Schwartz D.C."/>
            <person name="Dietrich R.A."/>
            <person name="Widdison S."/>
            <person name="Scalliet G."/>
        </authorList>
    </citation>
    <scope>NUCLEOTIDE SEQUENCE [LARGE SCALE GENOMIC DNA]</scope>
    <scope>GENOME REANNOTATION</scope>
    <source>
        <strain>B05.10</strain>
    </source>
</reference>
<sequence length="801" mass="87835">MAPKRNRDDDFVLTLSDNEGEDLTNAVEEELPLDPSSNKKRKRSDDTASTKKSKKSKKKPEEEDVEEEGIWGIKDADDGAMDSDFEFALEADGTGGADLEEFEGWGFDGAKKGLNGGDKKAVDIDEIIARRREKKKASGKKGEADDEVMVDQDDAAASNEEQDAPEGIDFEDEDDEFMAEDGFGMGAGSAEESGAEEDSDAEDDEEGEDDDSDNDSVASPAPHPDDAASEASDEDEDMDDDPEEAAKREAFFAPEEKPVKGAKQELNTTFQSMSLSRPILRGLATVGFTQPTPIQSKTIPVALLGKDVVGGAVTGSGKTAAFVVPVLERLLYRPKKVPTSRVAILMPTRELAIQCHAVATKLASHTDIKFCLAVGGLSLKVQEAELRLRPDVIIATPGRFIDHMRNSPSFTVDTLEILVLDEADRMLEAGFADELNEILTTIPKSRQTMLFSATMSSSVDNLIRVGLNRPVRLLVDSQKSTAGTLVQEFIRLRPGREGKRMGYLLYLCANVYTDRVIVFFRQKKEAHRARIIFGLSGLKATELHGSMSQEQRIKSVEAFRDGKASFLLATDLASRGLDIKGVDTVINYEAPQSHDIYLHRVGRTARAGRSGRACTIAAEPDRKVVKAAVKASRTQGAKVVSRVIEASEADSWSEKVDEMADEIEEILKEEKEDKILAQAEMEVRKGQNFIDHEAEIKGRPKRTWFETEKEKLAAKKLGVEELNGVVGGKKKGKLSNKDKKKLDDKGERLEGRVWKKGRQERDGKGVLAKEKGKKKVKGGKPPGPGGKKPMRPMRTGGAKRK</sequence>
<protein>
    <recommendedName>
        <fullName>ATP-dependent RNA helicase drs1</fullName>
        <ecNumber>3.6.4.13</ecNumber>
    </recommendedName>
</protein>
<proteinExistence type="inferred from homology"/>
<gene>
    <name type="primary">drs1</name>
    <name type="ORF">BC1G_03746</name>
    <name type="ORF">BCIN_10g04050</name>
</gene>
<organism>
    <name type="scientific">Botryotinia fuckeliana (strain B05.10)</name>
    <name type="common">Noble rot fungus</name>
    <name type="synonym">Botrytis cinerea</name>
    <dbReference type="NCBI Taxonomy" id="332648"/>
    <lineage>
        <taxon>Eukaryota</taxon>
        <taxon>Fungi</taxon>
        <taxon>Dikarya</taxon>
        <taxon>Ascomycota</taxon>
        <taxon>Pezizomycotina</taxon>
        <taxon>Leotiomycetes</taxon>
        <taxon>Helotiales</taxon>
        <taxon>Sclerotiniaceae</taxon>
        <taxon>Botrytis</taxon>
    </lineage>
</organism>